<dbReference type="EMBL" id="CP000764">
    <property type="protein sequence ID" value="ABS21954.1"/>
    <property type="molecule type" value="Genomic_DNA"/>
</dbReference>
<dbReference type="RefSeq" id="WP_012094130.1">
    <property type="nucleotide sequence ID" value="NC_009674.1"/>
</dbReference>
<dbReference type="SMR" id="A7GP96"/>
<dbReference type="STRING" id="315749.Bcer98_1645"/>
<dbReference type="GeneID" id="33896976"/>
<dbReference type="KEGG" id="bcy:Bcer98_1645"/>
<dbReference type="eggNOG" id="COG1826">
    <property type="taxonomic scope" value="Bacteria"/>
</dbReference>
<dbReference type="HOGENOM" id="CLU_086034_6_0_9"/>
<dbReference type="OrthoDB" id="9800908at2"/>
<dbReference type="Proteomes" id="UP000002300">
    <property type="component" value="Chromosome"/>
</dbReference>
<dbReference type="GO" id="GO:0033281">
    <property type="term" value="C:TAT protein transport complex"/>
    <property type="evidence" value="ECO:0007669"/>
    <property type="project" value="UniProtKB-UniRule"/>
</dbReference>
<dbReference type="GO" id="GO:0008320">
    <property type="term" value="F:protein transmembrane transporter activity"/>
    <property type="evidence" value="ECO:0007669"/>
    <property type="project" value="UniProtKB-UniRule"/>
</dbReference>
<dbReference type="GO" id="GO:0043953">
    <property type="term" value="P:protein transport by the Tat complex"/>
    <property type="evidence" value="ECO:0007669"/>
    <property type="project" value="UniProtKB-UniRule"/>
</dbReference>
<dbReference type="Gene3D" id="1.20.5.3310">
    <property type="match status" value="1"/>
</dbReference>
<dbReference type="HAMAP" id="MF_00236">
    <property type="entry name" value="TatA_E"/>
    <property type="match status" value="1"/>
</dbReference>
<dbReference type="InterPro" id="IPR003369">
    <property type="entry name" value="TatA/B/E"/>
</dbReference>
<dbReference type="InterPro" id="IPR006312">
    <property type="entry name" value="TatA/E"/>
</dbReference>
<dbReference type="NCBIfam" id="NF011430">
    <property type="entry name" value="PRK14861.1"/>
    <property type="match status" value="1"/>
</dbReference>
<dbReference type="NCBIfam" id="TIGR01411">
    <property type="entry name" value="tatAE"/>
    <property type="match status" value="1"/>
</dbReference>
<dbReference type="PANTHER" id="PTHR42982">
    <property type="entry name" value="SEC-INDEPENDENT PROTEIN TRANSLOCASE PROTEIN TATA"/>
    <property type="match status" value="1"/>
</dbReference>
<dbReference type="PANTHER" id="PTHR42982:SF1">
    <property type="entry name" value="SEC-INDEPENDENT PROTEIN TRANSLOCASE PROTEIN TATA"/>
    <property type="match status" value="1"/>
</dbReference>
<dbReference type="Pfam" id="PF02416">
    <property type="entry name" value="TatA_B_E"/>
    <property type="match status" value="1"/>
</dbReference>
<dbReference type="PRINTS" id="PR01506">
    <property type="entry name" value="TATBPROTEIN"/>
</dbReference>
<protein>
    <recommendedName>
        <fullName evidence="1">Sec-independent protein translocase protein TatA</fullName>
    </recommendedName>
</protein>
<proteinExistence type="inferred from homology"/>
<comment type="function">
    <text evidence="1">Part of the twin-arginine translocation (Tat) system that transports large folded proteins containing a characteristic twin-arginine motif in their signal peptide across membranes. TatA could form the protein-conducting channel of the Tat system.</text>
</comment>
<comment type="subunit">
    <text evidence="1">Forms a complex with TatC.</text>
</comment>
<comment type="subcellular location">
    <subcellularLocation>
        <location evidence="1">Cell membrane</location>
        <topology evidence="1">Single-pass membrane protein</topology>
    </subcellularLocation>
</comment>
<comment type="similarity">
    <text evidence="1">Belongs to the TatA/E family.</text>
</comment>
<accession>A7GP96</accession>
<reference key="1">
    <citation type="journal article" date="2008" name="Chem. Biol. Interact.">
        <title>Extending the Bacillus cereus group genomics to putative food-borne pathogens of different toxicity.</title>
        <authorList>
            <person name="Lapidus A."/>
            <person name="Goltsman E."/>
            <person name="Auger S."/>
            <person name="Galleron N."/>
            <person name="Segurens B."/>
            <person name="Dossat C."/>
            <person name="Land M.L."/>
            <person name="Broussolle V."/>
            <person name="Brillard J."/>
            <person name="Guinebretiere M.-H."/>
            <person name="Sanchis V."/>
            <person name="Nguen-the C."/>
            <person name="Lereclus D."/>
            <person name="Richardson P."/>
            <person name="Wincker P."/>
            <person name="Weissenbach J."/>
            <person name="Ehrlich S.D."/>
            <person name="Sorokin A."/>
        </authorList>
    </citation>
    <scope>NUCLEOTIDE SEQUENCE [LARGE SCALE GENOMIC DNA]</scope>
    <source>
        <strain>DSM 22905 / CIP 110041 / 391-98 / NVH 391-98</strain>
    </source>
</reference>
<sequence>MLSNIGFPGLILILVAILILFGPKKLPEIGRSLGETLKEFKKSTRELTDDAFQEKEKK</sequence>
<evidence type="ECO:0000255" key="1">
    <source>
        <dbReference type="HAMAP-Rule" id="MF_00236"/>
    </source>
</evidence>
<name>TATA_BACCN</name>
<feature type="chain" id="PRO_1000078295" description="Sec-independent protein translocase protein TatA">
    <location>
        <begin position="1"/>
        <end position="58"/>
    </location>
</feature>
<feature type="transmembrane region" description="Helical" evidence="1">
    <location>
        <begin position="1"/>
        <end position="21"/>
    </location>
</feature>
<gene>
    <name evidence="1" type="primary">tatA</name>
    <name type="ordered locus">Bcer98_1645</name>
</gene>
<keyword id="KW-1003">Cell membrane</keyword>
<keyword id="KW-0472">Membrane</keyword>
<keyword id="KW-0653">Protein transport</keyword>
<keyword id="KW-0811">Translocation</keyword>
<keyword id="KW-0812">Transmembrane</keyword>
<keyword id="KW-1133">Transmembrane helix</keyword>
<keyword id="KW-0813">Transport</keyword>
<organism>
    <name type="scientific">Bacillus cytotoxicus (strain DSM 22905 / CIP 110041 / 391-98 / NVH 391-98)</name>
    <dbReference type="NCBI Taxonomy" id="315749"/>
    <lineage>
        <taxon>Bacteria</taxon>
        <taxon>Bacillati</taxon>
        <taxon>Bacillota</taxon>
        <taxon>Bacilli</taxon>
        <taxon>Bacillales</taxon>
        <taxon>Bacillaceae</taxon>
        <taxon>Bacillus</taxon>
        <taxon>Bacillus cereus group</taxon>
    </lineage>
</organism>